<evidence type="ECO:0000255" key="1">
    <source>
        <dbReference type="HAMAP-Rule" id="MF_01261"/>
    </source>
</evidence>
<gene>
    <name evidence="1" type="primary">cca</name>
    <name type="ordered locus">BceJ2315_05550</name>
    <name type="ORF">BCAL0558</name>
</gene>
<sequence length="413" mass="45518">MNIYAVGGAIRDELLGVPVQDRDYVVVGATPEQMTAQGFRPVGKDFPVFLHPQTQEEYALARTERKTAAGYHGFQFHYAPDVTLDEDLARRDLTINAMAREVSPEGTLVGPVIDPFDGQADLRARVFRHVSDAFVEDPVRILRIARFAARFADFTVADETLALMRRMVDAGEVDALVPERVWQEIARGLMEAKPSRMFAVLRDCGALARILPEVDALWGVPQRADYHPEVDTGVHVMMVVDYAAKQGYSLAVRFAALTHDLGKGTTPADVLPRHVGHESRSVELLKPLCERLRVPNECRDLALVVAREHGNLHRVMEMGAAALVRLFERSDALRKPARFAELLQACESDARGRLGLDAQPYPQAERLRVALAAARSVDAGAIARGIGSDTEKIKEAVHRARIQAVAQALAIGE</sequence>
<reference key="1">
    <citation type="journal article" date="2009" name="J. Bacteriol.">
        <title>The genome of Burkholderia cenocepacia J2315, an epidemic pathogen of cystic fibrosis patients.</title>
        <authorList>
            <person name="Holden M.T."/>
            <person name="Seth-Smith H.M."/>
            <person name="Crossman L.C."/>
            <person name="Sebaihia M."/>
            <person name="Bentley S.D."/>
            <person name="Cerdeno-Tarraga A.M."/>
            <person name="Thomson N.R."/>
            <person name="Bason N."/>
            <person name="Quail M.A."/>
            <person name="Sharp S."/>
            <person name="Cherevach I."/>
            <person name="Churcher C."/>
            <person name="Goodhead I."/>
            <person name="Hauser H."/>
            <person name="Holroyd N."/>
            <person name="Mungall K."/>
            <person name="Scott P."/>
            <person name="Walker D."/>
            <person name="White B."/>
            <person name="Rose H."/>
            <person name="Iversen P."/>
            <person name="Mil-Homens D."/>
            <person name="Rocha E.P."/>
            <person name="Fialho A.M."/>
            <person name="Baldwin A."/>
            <person name="Dowson C."/>
            <person name="Barrell B.G."/>
            <person name="Govan J.R."/>
            <person name="Vandamme P."/>
            <person name="Hart C.A."/>
            <person name="Mahenthiralingam E."/>
            <person name="Parkhill J."/>
        </authorList>
    </citation>
    <scope>NUCLEOTIDE SEQUENCE [LARGE SCALE GENOMIC DNA]</scope>
    <source>
        <strain>ATCC BAA-245 / DSM 16553 / LMG 16656 / NCTC 13227 / J2315 / CF5610</strain>
    </source>
</reference>
<proteinExistence type="inferred from homology"/>
<comment type="function">
    <text evidence="1">Catalyzes the addition and repair of the essential 3'-terminal CCA sequence in tRNAs without using a nucleic acid template. Adds these three nucleotides in the order of C, C, and A to the tRNA nucleotide-73, using CTP and ATP as substrates and producing inorganic pyrophosphate. tRNA 3'-terminal CCA addition is required both for tRNA processing and repair. Also involved in tRNA surveillance by mediating tandem CCA addition to generate a CCACCA at the 3' terminus of unstable tRNAs. While stable tRNAs receive only 3'-terminal CCA, unstable tRNAs are marked with CCACCA and rapidly degraded.</text>
</comment>
<comment type="catalytic activity">
    <reaction evidence="1">
        <text>a tRNA precursor + 2 CTP + ATP = a tRNA with a 3' CCA end + 3 diphosphate</text>
        <dbReference type="Rhea" id="RHEA:14433"/>
        <dbReference type="Rhea" id="RHEA-COMP:10465"/>
        <dbReference type="Rhea" id="RHEA-COMP:10468"/>
        <dbReference type="ChEBI" id="CHEBI:30616"/>
        <dbReference type="ChEBI" id="CHEBI:33019"/>
        <dbReference type="ChEBI" id="CHEBI:37563"/>
        <dbReference type="ChEBI" id="CHEBI:74896"/>
        <dbReference type="ChEBI" id="CHEBI:83071"/>
        <dbReference type="EC" id="2.7.7.72"/>
    </reaction>
</comment>
<comment type="catalytic activity">
    <reaction evidence="1">
        <text>a tRNA with a 3' CCA end + 2 CTP + ATP = a tRNA with a 3' CCACCA end + 3 diphosphate</text>
        <dbReference type="Rhea" id="RHEA:76235"/>
        <dbReference type="Rhea" id="RHEA-COMP:10468"/>
        <dbReference type="Rhea" id="RHEA-COMP:18655"/>
        <dbReference type="ChEBI" id="CHEBI:30616"/>
        <dbReference type="ChEBI" id="CHEBI:33019"/>
        <dbReference type="ChEBI" id="CHEBI:37563"/>
        <dbReference type="ChEBI" id="CHEBI:83071"/>
        <dbReference type="ChEBI" id="CHEBI:195187"/>
    </reaction>
    <physiologicalReaction direction="left-to-right" evidence="1">
        <dbReference type="Rhea" id="RHEA:76236"/>
    </physiologicalReaction>
</comment>
<comment type="cofactor">
    <cofactor evidence="1">
        <name>Mg(2+)</name>
        <dbReference type="ChEBI" id="CHEBI:18420"/>
    </cofactor>
    <text evidence="1">Magnesium is required for nucleotidyltransferase activity.</text>
</comment>
<comment type="cofactor">
    <cofactor evidence="1">
        <name>Ni(2+)</name>
        <dbReference type="ChEBI" id="CHEBI:49786"/>
    </cofactor>
    <text evidence="1">Nickel for phosphatase activity.</text>
</comment>
<comment type="subunit">
    <text evidence="1">Monomer. Can also form homodimers and oligomers.</text>
</comment>
<comment type="domain">
    <text evidence="1">Comprises two domains: an N-terminal domain containing the nucleotidyltransferase activity and a C-terminal HD domain associated with both phosphodiesterase and phosphatase activities.</text>
</comment>
<comment type="miscellaneous">
    <text evidence="1">A single active site specifically recognizes both ATP and CTP and is responsible for their addition.</text>
</comment>
<comment type="similarity">
    <text evidence="1">Belongs to the tRNA nucleotidyltransferase/poly(A) polymerase family. Bacterial CCA-adding enzyme type 1 subfamily.</text>
</comment>
<protein>
    <recommendedName>
        <fullName evidence="1">Multifunctional CCA protein</fullName>
    </recommendedName>
    <domain>
        <recommendedName>
            <fullName evidence="1">CCA-adding enzyme</fullName>
            <ecNumber evidence="1">2.7.7.72</ecNumber>
        </recommendedName>
        <alternativeName>
            <fullName evidence="1">CCA tRNA nucleotidyltransferase</fullName>
        </alternativeName>
        <alternativeName>
            <fullName evidence="1">tRNA CCA-pyrophosphorylase</fullName>
        </alternativeName>
        <alternativeName>
            <fullName evidence="1">tRNA adenylyl-/cytidylyl-transferase</fullName>
        </alternativeName>
        <alternativeName>
            <fullName evidence="1">tRNA nucleotidyltransferase</fullName>
        </alternativeName>
        <alternativeName>
            <fullName evidence="1">tRNA-NT</fullName>
        </alternativeName>
    </domain>
    <domain>
        <recommendedName>
            <fullName evidence="1">2'-nucleotidase</fullName>
            <ecNumber evidence="1">3.1.3.-</ecNumber>
        </recommendedName>
    </domain>
    <domain>
        <recommendedName>
            <fullName evidence="1">2',3'-cyclic phosphodiesterase</fullName>
            <ecNumber evidence="1">3.1.4.-</ecNumber>
        </recommendedName>
    </domain>
    <domain>
        <recommendedName>
            <fullName evidence="1">Phosphatase</fullName>
            <ecNumber evidence="1">3.1.3.-</ecNumber>
        </recommendedName>
    </domain>
</protein>
<organism>
    <name type="scientific">Burkholderia cenocepacia (strain ATCC BAA-245 / DSM 16553 / LMG 16656 / NCTC 13227 / J2315 / CF5610)</name>
    <name type="common">Burkholderia cepacia (strain J2315)</name>
    <dbReference type="NCBI Taxonomy" id="216591"/>
    <lineage>
        <taxon>Bacteria</taxon>
        <taxon>Pseudomonadati</taxon>
        <taxon>Pseudomonadota</taxon>
        <taxon>Betaproteobacteria</taxon>
        <taxon>Burkholderiales</taxon>
        <taxon>Burkholderiaceae</taxon>
        <taxon>Burkholderia</taxon>
        <taxon>Burkholderia cepacia complex</taxon>
    </lineage>
</organism>
<feature type="chain" id="PRO_1000140025" description="Multifunctional CCA protein">
    <location>
        <begin position="1"/>
        <end position="413"/>
    </location>
</feature>
<feature type="domain" description="HD" evidence="1">
    <location>
        <begin position="232"/>
        <end position="333"/>
    </location>
</feature>
<feature type="binding site" evidence="1">
    <location>
        <position position="8"/>
    </location>
    <ligand>
        <name>ATP</name>
        <dbReference type="ChEBI" id="CHEBI:30616"/>
    </ligand>
</feature>
<feature type="binding site" evidence="1">
    <location>
        <position position="8"/>
    </location>
    <ligand>
        <name>CTP</name>
        <dbReference type="ChEBI" id="CHEBI:37563"/>
    </ligand>
</feature>
<feature type="binding site" evidence="1">
    <location>
        <position position="11"/>
    </location>
    <ligand>
        <name>ATP</name>
        <dbReference type="ChEBI" id="CHEBI:30616"/>
    </ligand>
</feature>
<feature type="binding site" evidence="1">
    <location>
        <position position="11"/>
    </location>
    <ligand>
        <name>CTP</name>
        <dbReference type="ChEBI" id="CHEBI:37563"/>
    </ligand>
</feature>
<feature type="binding site" evidence="1">
    <location>
        <position position="21"/>
    </location>
    <ligand>
        <name>Mg(2+)</name>
        <dbReference type="ChEBI" id="CHEBI:18420"/>
    </ligand>
</feature>
<feature type="binding site" evidence="1">
    <location>
        <position position="23"/>
    </location>
    <ligand>
        <name>Mg(2+)</name>
        <dbReference type="ChEBI" id="CHEBI:18420"/>
    </ligand>
</feature>
<feature type="binding site" evidence="1">
    <location>
        <position position="91"/>
    </location>
    <ligand>
        <name>ATP</name>
        <dbReference type="ChEBI" id="CHEBI:30616"/>
    </ligand>
</feature>
<feature type="binding site" evidence="1">
    <location>
        <position position="91"/>
    </location>
    <ligand>
        <name>CTP</name>
        <dbReference type="ChEBI" id="CHEBI:37563"/>
    </ligand>
</feature>
<feature type="binding site" evidence="1">
    <location>
        <position position="143"/>
    </location>
    <ligand>
        <name>ATP</name>
        <dbReference type="ChEBI" id="CHEBI:30616"/>
    </ligand>
</feature>
<feature type="binding site" evidence="1">
    <location>
        <position position="143"/>
    </location>
    <ligand>
        <name>CTP</name>
        <dbReference type="ChEBI" id="CHEBI:37563"/>
    </ligand>
</feature>
<feature type="binding site" evidence="1">
    <location>
        <position position="146"/>
    </location>
    <ligand>
        <name>ATP</name>
        <dbReference type="ChEBI" id="CHEBI:30616"/>
    </ligand>
</feature>
<feature type="binding site" evidence="1">
    <location>
        <position position="146"/>
    </location>
    <ligand>
        <name>CTP</name>
        <dbReference type="ChEBI" id="CHEBI:37563"/>
    </ligand>
</feature>
<keyword id="KW-0067">ATP-binding</keyword>
<keyword id="KW-0378">Hydrolase</keyword>
<keyword id="KW-0460">Magnesium</keyword>
<keyword id="KW-0479">Metal-binding</keyword>
<keyword id="KW-0511">Multifunctional enzyme</keyword>
<keyword id="KW-0533">Nickel</keyword>
<keyword id="KW-0547">Nucleotide-binding</keyword>
<keyword id="KW-0548">Nucleotidyltransferase</keyword>
<keyword id="KW-0692">RNA repair</keyword>
<keyword id="KW-0694">RNA-binding</keyword>
<keyword id="KW-0808">Transferase</keyword>
<keyword id="KW-0819">tRNA processing</keyword>
<name>CCA_BURCJ</name>
<dbReference type="EC" id="2.7.7.72" evidence="1"/>
<dbReference type="EC" id="3.1.3.-" evidence="1"/>
<dbReference type="EC" id="3.1.4.-" evidence="1"/>
<dbReference type="EMBL" id="AM747720">
    <property type="protein sequence ID" value="CAR50868.1"/>
    <property type="molecule type" value="Genomic_DNA"/>
</dbReference>
<dbReference type="RefSeq" id="WP_006483182.1">
    <property type="nucleotide sequence ID" value="NC_011000.1"/>
</dbReference>
<dbReference type="SMR" id="B4E8K1"/>
<dbReference type="KEGG" id="bcj:BCAL0558"/>
<dbReference type="eggNOG" id="COG0617">
    <property type="taxonomic scope" value="Bacteria"/>
</dbReference>
<dbReference type="HOGENOM" id="CLU_015961_1_1_4"/>
<dbReference type="BioCyc" id="BCEN216591:G1G1V-634-MONOMER"/>
<dbReference type="Proteomes" id="UP000001035">
    <property type="component" value="Chromosome 1"/>
</dbReference>
<dbReference type="GO" id="GO:0005524">
    <property type="term" value="F:ATP binding"/>
    <property type="evidence" value="ECO:0007669"/>
    <property type="project" value="UniProtKB-UniRule"/>
</dbReference>
<dbReference type="GO" id="GO:0004810">
    <property type="term" value="F:CCA tRNA nucleotidyltransferase activity"/>
    <property type="evidence" value="ECO:0007669"/>
    <property type="project" value="UniProtKB-UniRule"/>
</dbReference>
<dbReference type="GO" id="GO:0004112">
    <property type="term" value="F:cyclic-nucleotide phosphodiesterase activity"/>
    <property type="evidence" value="ECO:0007669"/>
    <property type="project" value="UniProtKB-UniRule"/>
</dbReference>
<dbReference type="GO" id="GO:0000287">
    <property type="term" value="F:magnesium ion binding"/>
    <property type="evidence" value="ECO:0007669"/>
    <property type="project" value="UniProtKB-UniRule"/>
</dbReference>
<dbReference type="GO" id="GO:0016791">
    <property type="term" value="F:phosphatase activity"/>
    <property type="evidence" value="ECO:0007669"/>
    <property type="project" value="UniProtKB-UniRule"/>
</dbReference>
<dbReference type="GO" id="GO:0000049">
    <property type="term" value="F:tRNA binding"/>
    <property type="evidence" value="ECO:0007669"/>
    <property type="project" value="UniProtKB-UniRule"/>
</dbReference>
<dbReference type="GO" id="GO:0042245">
    <property type="term" value="P:RNA repair"/>
    <property type="evidence" value="ECO:0007669"/>
    <property type="project" value="UniProtKB-KW"/>
</dbReference>
<dbReference type="GO" id="GO:0001680">
    <property type="term" value="P:tRNA 3'-terminal CCA addition"/>
    <property type="evidence" value="ECO:0007669"/>
    <property type="project" value="UniProtKB-UniRule"/>
</dbReference>
<dbReference type="CDD" id="cd05398">
    <property type="entry name" value="NT_ClassII-CCAase"/>
    <property type="match status" value="1"/>
</dbReference>
<dbReference type="Gene3D" id="3.30.460.10">
    <property type="entry name" value="Beta Polymerase, domain 2"/>
    <property type="match status" value="1"/>
</dbReference>
<dbReference type="Gene3D" id="1.10.3090.10">
    <property type="entry name" value="cca-adding enzyme, domain 2"/>
    <property type="match status" value="1"/>
</dbReference>
<dbReference type="HAMAP" id="MF_01261">
    <property type="entry name" value="CCA_bact_type1"/>
    <property type="match status" value="1"/>
</dbReference>
<dbReference type="HAMAP" id="MF_01262">
    <property type="entry name" value="CCA_bact_type2"/>
    <property type="match status" value="1"/>
</dbReference>
<dbReference type="InterPro" id="IPR012006">
    <property type="entry name" value="CCA_bact"/>
</dbReference>
<dbReference type="InterPro" id="IPR006674">
    <property type="entry name" value="HD_domain"/>
</dbReference>
<dbReference type="InterPro" id="IPR043519">
    <property type="entry name" value="NT_sf"/>
</dbReference>
<dbReference type="InterPro" id="IPR002646">
    <property type="entry name" value="PolA_pol_head_dom"/>
</dbReference>
<dbReference type="InterPro" id="IPR032828">
    <property type="entry name" value="PolyA_RNA-bd"/>
</dbReference>
<dbReference type="InterPro" id="IPR050124">
    <property type="entry name" value="tRNA_CCA-adding_enzyme"/>
</dbReference>
<dbReference type="NCBIfam" id="NF008137">
    <property type="entry name" value="PRK10885.1"/>
    <property type="match status" value="1"/>
</dbReference>
<dbReference type="PANTHER" id="PTHR47545">
    <property type="entry name" value="MULTIFUNCTIONAL CCA PROTEIN"/>
    <property type="match status" value="1"/>
</dbReference>
<dbReference type="PANTHER" id="PTHR47545:SF1">
    <property type="entry name" value="MULTIFUNCTIONAL CCA PROTEIN"/>
    <property type="match status" value="1"/>
</dbReference>
<dbReference type="Pfam" id="PF01966">
    <property type="entry name" value="HD"/>
    <property type="match status" value="1"/>
</dbReference>
<dbReference type="Pfam" id="PF01743">
    <property type="entry name" value="PolyA_pol"/>
    <property type="match status" value="1"/>
</dbReference>
<dbReference type="Pfam" id="PF12627">
    <property type="entry name" value="PolyA_pol_RNAbd"/>
    <property type="match status" value="1"/>
</dbReference>
<dbReference type="PIRSF" id="PIRSF000813">
    <property type="entry name" value="CCA_bact"/>
    <property type="match status" value="1"/>
</dbReference>
<dbReference type="SUPFAM" id="SSF81301">
    <property type="entry name" value="Nucleotidyltransferase"/>
    <property type="match status" value="1"/>
</dbReference>
<dbReference type="SUPFAM" id="SSF81891">
    <property type="entry name" value="Poly A polymerase C-terminal region-like"/>
    <property type="match status" value="1"/>
</dbReference>
<dbReference type="PROSITE" id="PS51831">
    <property type="entry name" value="HD"/>
    <property type="match status" value="1"/>
</dbReference>
<accession>B4E8K1</accession>